<dbReference type="EC" id="2.1.2.3" evidence="1"/>
<dbReference type="EC" id="3.5.4.10" evidence="1"/>
<dbReference type="EMBL" id="CP001176">
    <property type="protein sequence ID" value="ACK59567.1"/>
    <property type="molecule type" value="Genomic_DNA"/>
</dbReference>
<dbReference type="RefSeq" id="WP_000745434.1">
    <property type="nucleotide sequence ID" value="NC_011725.1"/>
</dbReference>
<dbReference type="SMR" id="B7H4U0"/>
<dbReference type="KEGG" id="bcb:BCB4264_A0344"/>
<dbReference type="HOGENOM" id="CLU_016316_5_2_9"/>
<dbReference type="UniPathway" id="UPA00074">
    <property type="reaction ID" value="UER00133"/>
</dbReference>
<dbReference type="UniPathway" id="UPA00074">
    <property type="reaction ID" value="UER00135"/>
</dbReference>
<dbReference type="Proteomes" id="UP000007096">
    <property type="component" value="Chromosome"/>
</dbReference>
<dbReference type="GO" id="GO:0005829">
    <property type="term" value="C:cytosol"/>
    <property type="evidence" value="ECO:0007669"/>
    <property type="project" value="TreeGrafter"/>
</dbReference>
<dbReference type="GO" id="GO:0003937">
    <property type="term" value="F:IMP cyclohydrolase activity"/>
    <property type="evidence" value="ECO:0007669"/>
    <property type="project" value="UniProtKB-UniRule"/>
</dbReference>
<dbReference type="GO" id="GO:0004643">
    <property type="term" value="F:phosphoribosylaminoimidazolecarboxamide formyltransferase activity"/>
    <property type="evidence" value="ECO:0007669"/>
    <property type="project" value="UniProtKB-UniRule"/>
</dbReference>
<dbReference type="GO" id="GO:0006189">
    <property type="term" value="P:'de novo' IMP biosynthetic process"/>
    <property type="evidence" value="ECO:0007669"/>
    <property type="project" value="UniProtKB-UniRule"/>
</dbReference>
<dbReference type="CDD" id="cd01421">
    <property type="entry name" value="IMPCH"/>
    <property type="match status" value="1"/>
</dbReference>
<dbReference type="FunFam" id="3.40.140.20:FF:000001">
    <property type="entry name" value="Bifunctional purine biosynthesis protein PurH"/>
    <property type="match status" value="1"/>
</dbReference>
<dbReference type="FunFam" id="3.40.140.20:FF:000002">
    <property type="entry name" value="Bifunctional purine biosynthesis protein PurH"/>
    <property type="match status" value="1"/>
</dbReference>
<dbReference type="FunFam" id="3.40.50.1380:FF:000001">
    <property type="entry name" value="Bifunctional purine biosynthesis protein PurH"/>
    <property type="match status" value="1"/>
</dbReference>
<dbReference type="Gene3D" id="3.40.140.20">
    <property type="match status" value="2"/>
</dbReference>
<dbReference type="Gene3D" id="3.40.50.1380">
    <property type="entry name" value="Methylglyoxal synthase-like domain"/>
    <property type="match status" value="1"/>
</dbReference>
<dbReference type="HAMAP" id="MF_00139">
    <property type="entry name" value="PurH"/>
    <property type="match status" value="1"/>
</dbReference>
<dbReference type="InterPro" id="IPR024051">
    <property type="entry name" value="AICAR_Tfase_dup_dom_sf"/>
</dbReference>
<dbReference type="InterPro" id="IPR016193">
    <property type="entry name" value="Cytidine_deaminase-like"/>
</dbReference>
<dbReference type="InterPro" id="IPR011607">
    <property type="entry name" value="MGS-like_dom"/>
</dbReference>
<dbReference type="InterPro" id="IPR036914">
    <property type="entry name" value="MGS-like_dom_sf"/>
</dbReference>
<dbReference type="InterPro" id="IPR002695">
    <property type="entry name" value="PurH-like"/>
</dbReference>
<dbReference type="NCBIfam" id="NF002049">
    <property type="entry name" value="PRK00881.1"/>
    <property type="match status" value="1"/>
</dbReference>
<dbReference type="NCBIfam" id="TIGR00355">
    <property type="entry name" value="purH"/>
    <property type="match status" value="1"/>
</dbReference>
<dbReference type="PANTHER" id="PTHR11692:SF0">
    <property type="entry name" value="BIFUNCTIONAL PURINE BIOSYNTHESIS PROTEIN ATIC"/>
    <property type="match status" value="1"/>
</dbReference>
<dbReference type="PANTHER" id="PTHR11692">
    <property type="entry name" value="BIFUNCTIONAL PURINE BIOSYNTHESIS PROTEIN PURH"/>
    <property type="match status" value="1"/>
</dbReference>
<dbReference type="Pfam" id="PF01808">
    <property type="entry name" value="AICARFT_IMPCHas"/>
    <property type="match status" value="1"/>
</dbReference>
<dbReference type="Pfam" id="PF02142">
    <property type="entry name" value="MGS"/>
    <property type="match status" value="1"/>
</dbReference>
<dbReference type="PIRSF" id="PIRSF000414">
    <property type="entry name" value="AICARFT_IMPCHas"/>
    <property type="match status" value="1"/>
</dbReference>
<dbReference type="SMART" id="SM00798">
    <property type="entry name" value="AICARFT_IMPCHas"/>
    <property type="match status" value="1"/>
</dbReference>
<dbReference type="SMART" id="SM00851">
    <property type="entry name" value="MGS"/>
    <property type="match status" value="1"/>
</dbReference>
<dbReference type="SUPFAM" id="SSF53927">
    <property type="entry name" value="Cytidine deaminase-like"/>
    <property type="match status" value="1"/>
</dbReference>
<dbReference type="SUPFAM" id="SSF52335">
    <property type="entry name" value="Methylglyoxal synthase-like"/>
    <property type="match status" value="1"/>
</dbReference>
<dbReference type="PROSITE" id="PS51855">
    <property type="entry name" value="MGS"/>
    <property type="match status" value="1"/>
</dbReference>
<feature type="chain" id="PRO_1000117866" description="Bifunctional purine biosynthesis protein PurH">
    <location>
        <begin position="1"/>
        <end position="511"/>
    </location>
</feature>
<feature type="domain" description="MGS-like" evidence="2">
    <location>
        <begin position="1"/>
        <end position="145"/>
    </location>
</feature>
<protein>
    <recommendedName>
        <fullName evidence="1">Bifunctional purine biosynthesis protein PurH</fullName>
    </recommendedName>
    <domain>
        <recommendedName>
            <fullName evidence="1">Phosphoribosylaminoimidazolecarboxamide formyltransferase</fullName>
            <ecNumber evidence="1">2.1.2.3</ecNumber>
        </recommendedName>
        <alternativeName>
            <fullName evidence="1">AICAR transformylase</fullName>
        </alternativeName>
    </domain>
    <domain>
        <recommendedName>
            <fullName evidence="1">IMP cyclohydrolase</fullName>
            <ecNumber evidence="1">3.5.4.10</ecNumber>
        </recommendedName>
        <alternativeName>
            <fullName evidence="1">ATIC</fullName>
        </alternativeName>
        <alternativeName>
            <fullName evidence="1">IMP synthase</fullName>
        </alternativeName>
        <alternativeName>
            <fullName evidence="1">Inosinicase</fullName>
        </alternativeName>
    </domain>
</protein>
<accession>B7H4U0</accession>
<keyword id="KW-0378">Hydrolase</keyword>
<keyword id="KW-0511">Multifunctional enzyme</keyword>
<keyword id="KW-0658">Purine biosynthesis</keyword>
<keyword id="KW-0808">Transferase</keyword>
<gene>
    <name evidence="1" type="primary">purH</name>
    <name type="ordered locus">BCB4264_A0344</name>
</gene>
<reference key="1">
    <citation type="submission" date="2008-10" db="EMBL/GenBank/DDBJ databases">
        <title>Genome sequence of Bacillus cereus B4264.</title>
        <authorList>
            <person name="Dodson R.J."/>
            <person name="Durkin A.S."/>
            <person name="Rosovitz M.J."/>
            <person name="Rasko D.A."/>
            <person name="Hoffmaster A."/>
            <person name="Ravel J."/>
            <person name="Sutton G."/>
        </authorList>
    </citation>
    <scope>NUCLEOTIDE SEQUENCE [LARGE SCALE GENOMIC DNA]</scope>
    <source>
        <strain>B4264</strain>
    </source>
</reference>
<evidence type="ECO:0000255" key="1">
    <source>
        <dbReference type="HAMAP-Rule" id="MF_00139"/>
    </source>
</evidence>
<evidence type="ECO:0000255" key="2">
    <source>
        <dbReference type="PROSITE-ProRule" id="PRU01202"/>
    </source>
</evidence>
<proteinExistence type="inferred from homology"/>
<comment type="catalytic activity">
    <reaction evidence="1">
        <text>(6R)-10-formyltetrahydrofolate + 5-amino-1-(5-phospho-beta-D-ribosyl)imidazole-4-carboxamide = 5-formamido-1-(5-phospho-D-ribosyl)imidazole-4-carboxamide + (6S)-5,6,7,8-tetrahydrofolate</text>
        <dbReference type="Rhea" id="RHEA:22192"/>
        <dbReference type="ChEBI" id="CHEBI:57453"/>
        <dbReference type="ChEBI" id="CHEBI:58467"/>
        <dbReference type="ChEBI" id="CHEBI:58475"/>
        <dbReference type="ChEBI" id="CHEBI:195366"/>
        <dbReference type="EC" id="2.1.2.3"/>
    </reaction>
</comment>
<comment type="catalytic activity">
    <reaction evidence="1">
        <text>IMP + H2O = 5-formamido-1-(5-phospho-D-ribosyl)imidazole-4-carboxamide</text>
        <dbReference type="Rhea" id="RHEA:18445"/>
        <dbReference type="ChEBI" id="CHEBI:15377"/>
        <dbReference type="ChEBI" id="CHEBI:58053"/>
        <dbReference type="ChEBI" id="CHEBI:58467"/>
        <dbReference type="EC" id="3.5.4.10"/>
    </reaction>
</comment>
<comment type="pathway">
    <text evidence="1">Purine metabolism; IMP biosynthesis via de novo pathway; 5-formamido-1-(5-phospho-D-ribosyl)imidazole-4-carboxamide from 5-amino-1-(5-phospho-D-ribosyl)imidazole-4-carboxamide (10-formyl THF route): step 1/1.</text>
</comment>
<comment type="pathway">
    <text evidence="1">Purine metabolism; IMP biosynthesis via de novo pathway; IMP from 5-formamido-1-(5-phospho-D-ribosyl)imidazole-4-carboxamide: step 1/1.</text>
</comment>
<comment type="domain">
    <text evidence="1">The IMP cyclohydrolase activity resides in the N-terminal region.</text>
</comment>
<comment type="similarity">
    <text evidence="1">Belongs to the PurH family.</text>
</comment>
<name>PUR9_BACC4</name>
<organism>
    <name type="scientific">Bacillus cereus (strain B4264)</name>
    <dbReference type="NCBI Taxonomy" id="405532"/>
    <lineage>
        <taxon>Bacteria</taxon>
        <taxon>Bacillati</taxon>
        <taxon>Bacillota</taxon>
        <taxon>Bacilli</taxon>
        <taxon>Bacillales</taxon>
        <taxon>Bacillaceae</taxon>
        <taxon>Bacillus</taxon>
        <taxon>Bacillus cereus group</taxon>
    </lineage>
</organism>
<sequence>MKKRALVSVSDKTGVVEFVKGLLEQGIEVISTGGTKKLLEENGLQVIGISEVTGFPEIMDGRVKTLHPNIHGGLLAVRDNETHVTQMNELGIEPIDFVVVNLYPFKETIAKPDVTFADAIENIDIGGPTMIRSAAKNHKFVSVIVDPVDYDIVLAELKENGEVAEETKRKLAAKVFRHTAAYDALISNYLTEQMGEESPETLTVTFEKKQDLRYGENPHQKATFYKAPFAATSSVAYAEQLHGKELSYNNINDADAALSIVKEFTEPAVVAVKHMNPCGVGVGTNIHEAYTRAYEADPVSIFGGIIAANREIDKATAEKLHEIFLEIVIAPSFSQEALEVLQSKKNLRLLTINIEKATSASKKLTSVQGGLLVQEEDTLSLDESTISIPTKREPSEQEWKDLKLAWKVVKHVKSNAIVLAKDDMTIGVGAGQMNRVGSAKIAITQAGEKAQGSALASDAFFPMPDTLEEAAKAGITAIIQPGGSIRDEDSIKVADTYGIAMVFTGVRHFKH</sequence>